<dbReference type="EC" id="3.5.2.9" evidence="1"/>
<dbReference type="EMBL" id="CP000546">
    <property type="protein sequence ID" value="ABN01059.1"/>
    <property type="molecule type" value="Genomic_DNA"/>
</dbReference>
<dbReference type="RefSeq" id="WP_004197223.1">
    <property type="nucleotide sequence ID" value="NC_008836.1"/>
</dbReference>
<dbReference type="SMR" id="A2S808"/>
<dbReference type="GeneID" id="92980979"/>
<dbReference type="KEGG" id="bml:BMA10229_A2113"/>
<dbReference type="HOGENOM" id="CLU_069535_0_0_4"/>
<dbReference type="Proteomes" id="UP000002283">
    <property type="component" value="Chromosome I"/>
</dbReference>
<dbReference type="GO" id="GO:0017168">
    <property type="term" value="F:5-oxoprolinase (ATP-hydrolyzing) activity"/>
    <property type="evidence" value="ECO:0007669"/>
    <property type="project" value="UniProtKB-UniRule"/>
</dbReference>
<dbReference type="GO" id="GO:0005524">
    <property type="term" value="F:ATP binding"/>
    <property type="evidence" value="ECO:0007669"/>
    <property type="project" value="UniProtKB-UniRule"/>
</dbReference>
<dbReference type="GO" id="GO:0005975">
    <property type="term" value="P:carbohydrate metabolic process"/>
    <property type="evidence" value="ECO:0007669"/>
    <property type="project" value="InterPro"/>
</dbReference>
<dbReference type="CDD" id="cd10800">
    <property type="entry name" value="LamB_YcsF_YbgL_like"/>
    <property type="match status" value="1"/>
</dbReference>
<dbReference type="Gene3D" id="3.20.20.370">
    <property type="entry name" value="Glycoside hydrolase/deacetylase"/>
    <property type="match status" value="1"/>
</dbReference>
<dbReference type="HAMAP" id="MF_00691">
    <property type="entry name" value="PxpA"/>
    <property type="match status" value="1"/>
</dbReference>
<dbReference type="InterPro" id="IPR011330">
    <property type="entry name" value="Glyco_hydro/deAcase_b/a-brl"/>
</dbReference>
<dbReference type="InterPro" id="IPR005501">
    <property type="entry name" value="LamB/YcsF/PxpA-like"/>
</dbReference>
<dbReference type="NCBIfam" id="NF003812">
    <property type="entry name" value="PRK05406.1-1"/>
    <property type="match status" value="1"/>
</dbReference>
<dbReference type="NCBIfam" id="NF003814">
    <property type="entry name" value="PRK05406.1-3"/>
    <property type="match status" value="1"/>
</dbReference>
<dbReference type="NCBIfam" id="NF003815">
    <property type="entry name" value="PRK05406.1-4"/>
    <property type="match status" value="1"/>
</dbReference>
<dbReference type="NCBIfam" id="NF003816">
    <property type="entry name" value="PRK05406.1-5"/>
    <property type="match status" value="1"/>
</dbReference>
<dbReference type="PANTHER" id="PTHR30292:SF0">
    <property type="entry name" value="5-OXOPROLINASE SUBUNIT A"/>
    <property type="match status" value="1"/>
</dbReference>
<dbReference type="PANTHER" id="PTHR30292">
    <property type="entry name" value="UNCHARACTERIZED PROTEIN YBGL-RELATED"/>
    <property type="match status" value="1"/>
</dbReference>
<dbReference type="Pfam" id="PF03746">
    <property type="entry name" value="LamB_YcsF"/>
    <property type="match status" value="1"/>
</dbReference>
<dbReference type="SUPFAM" id="SSF88713">
    <property type="entry name" value="Glycoside hydrolase/deacetylase"/>
    <property type="match status" value="1"/>
</dbReference>
<name>PXPA_BURM9</name>
<accession>A2S808</accession>
<evidence type="ECO:0000255" key="1">
    <source>
        <dbReference type="HAMAP-Rule" id="MF_00691"/>
    </source>
</evidence>
<proteinExistence type="inferred from homology"/>
<protein>
    <recommendedName>
        <fullName evidence="1">5-oxoprolinase subunit A</fullName>
        <shortName evidence="1">5-OPase subunit A</shortName>
        <ecNumber evidence="1">3.5.2.9</ecNumber>
    </recommendedName>
    <alternativeName>
        <fullName evidence="1">5-oxoprolinase (ATP-hydrolyzing) subunit A</fullName>
    </alternativeName>
</protein>
<feature type="chain" id="PRO_1000045190" description="5-oxoprolinase subunit A">
    <location>
        <begin position="1"/>
        <end position="254"/>
    </location>
</feature>
<gene>
    <name evidence="1" type="primary">pxpA</name>
    <name type="ordered locus">BMA10229_A2113</name>
</gene>
<sequence length="254" mass="26718">MEIDLNADLGEGCGSDEALLDLVTSANIACGWHAGGAQAMRDCVRWAVEKGVSIGAHPSFHDPENFGRKEMDLPASEIYAGVLYQLGALSAIAQAEGGRIAHVKPHGALYNQAAREPEIADAVVSAIHDFDPSLAVFGLAKSGFVDAAQQAGLVAVEEVFADRGYRADGSLVPRSQPGALVDDENEMLARTLEMVRGQRVRAVTGEWVPLNAQTVCLHGDGPHALAFAKRIRDALEAAGIDVHAPGALHAGERA</sequence>
<keyword id="KW-0067">ATP-binding</keyword>
<keyword id="KW-0378">Hydrolase</keyword>
<keyword id="KW-0547">Nucleotide-binding</keyword>
<comment type="function">
    <text evidence="1">Catalyzes the cleavage of 5-oxoproline to form L-glutamate coupled to the hydrolysis of ATP to ADP and inorganic phosphate.</text>
</comment>
<comment type="catalytic activity">
    <reaction evidence="1">
        <text>5-oxo-L-proline + ATP + 2 H2O = L-glutamate + ADP + phosphate + H(+)</text>
        <dbReference type="Rhea" id="RHEA:10348"/>
        <dbReference type="ChEBI" id="CHEBI:15377"/>
        <dbReference type="ChEBI" id="CHEBI:15378"/>
        <dbReference type="ChEBI" id="CHEBI:29985"/>
        <dbReference type="ChEBI" id="CHEBI:30616"/>
        <dbReference type="ChEBI" id="CHEBI:43474"/>
        <dbReference type="ChEBI" id="CHEBI:58402"/>
        <dbReference type="ChEBI" id="CHEBI:456216"/>
        <dbReference type="EC" id="3.5.2.9"/>
    </reaction>
</comment>
<comment type="subunit">
    <text evidence="1">Forms a complex composed of PxpA, PxpB and PxpC.</text>
</comment>
<comment type="similarity">
    <text evidence="1">Belongs to the LamB/PxpA family.</text>
</comment>
<reference key="1">
    <citation type="journal article" date="2010" name="Genome Biol. Evol.">
        <title>Continuing evolution of Burkholderia mallei through genome reduction and large-scale rearrangements.</title>
        <authorList>
            <person name="Losada L."/>
            <person name="Ronning C.M."/>
            <person name="DeShazer D."/>
            <person name="Woods D."/>
            <person name="Fedorova N."/>
            <person name="Kim H.S."/>
            <person name="Shabalina S.A."/>
            <person name="Pearson T.R."/>
            <person name="Brinkac L."/>
            <person name="Tan P."/>
            <person name="Nandi T."/>
            <person name="Crabtree J."/>
            <person name="Badger J."/>
            <person name="Beckstrom-Sternberg S."/>
            <person name="Saqib M."/>
            <person name="Schutzer S.E."/>
            <person name="Keim P."/>
            <person name="Nierman W.C."/>
        </authorList>
    </citation>
    <scope>NUCLEOTIDE SEQUENCE [LARGE SCALE GENOMIC DNA]</scope>
    <source>
        <strain>NCTC 10229</strain>
    </source>
</reference>
<organism>
    <name type="scientific">Burkholderia mallei (strain NCTC 10229)</name>
    <dbReference type="NCBI Taxonomy" id="412022"/>
    <lineage>
        <taxon>Bacteria</taxon>
        <taxon>Pseudomonadati</taxon>
        <taxon>Pseudomonadota</taxon>
        <taxon>Betaproteobacteria</taxon>
        <taxon>Burkholderiales</taxon>
        <taxon>Burkholderiaceae</taxon>
        <taxon>Burkholderia</taxon>
        <taxon>pseudomallei group</taxon>
    </lineage>
</organism>